<comment type="function">
    <text evidence="1">Catalyzes the interconversion of L-alanine and D-alanine. May also act on other amino acids.</text>
</comment>
<comment type="catalytic activity">
    <reaction evidence="1">
        <text>L-alanine = D-alanine</text>
        <dbReference type="Rhea" id="RHEA:20249"/>
        <dbReference type="ChEBI" id="CHEBI:57416"/>
        <dbReference type="ChEBI" id="CHEBI:57972"/>
        <dbReference type="EC" id="5.1.1.1"/>
    </reaction>
</comment>
<comment type="cofactor">
    <cofactor evidence="1">
        <name>pyridoxal 5'-phosphate</name>
        <dbReference type="ChEBI" id="CHEBI:597326"/>
    </cofactor>
</comment>
<comment type="pathway">
    <text evidence="1">Amino-acid biosynthesis; D-alanine biosynthesis; D-alanine from L-alanine: step 1/1.</text>
</comment>
<comment type="similarity">
    <text evidence="1">Belongs to the alanine racemase family.</text>
</comment>
<keyword id="KW-0413">Isomerase</keyword>
<keyword id="KW-0663">Pyridoxal phosphate</keyword>
<sequence>MSLIKIDQKAYEYNLRHIAKKIGSFQRLICVFKDNAYGHGAKLLAPLAKNLGVSFVAVKSEEEAQEIEEFFENILILSHRPHGNENSRFIYALNDISQVKKYKQDIKIHLKIDTGMHRNGICVENLEHAIDLIRSSDLKLTGMFTHFASADEMDGSFFVQKENFQKAKKIVKKYFSNLLFHSHNSAALFRGKIPEDEYCRVGLVQFGYGDSNLKKVLSLYAHRLSQRILQKGQSIGYGGIFTAAKDMEVATYDLGYADGLFRYNGKGELVLGNGKVMLGKMSMDSFSCENSGEEICVFKDADIWADFFHTINYEILVKLNPNIQRVLV</sequence>
<dbReference type="EC" id="5.1.1.1" evidence="1"/>
<dbReference type="EMBL" id="CP000538">
    <property type="protein sequence ID" value="EAQ72430.1"/>
    <property type="molecule type" value="Genomic_DNA"/>
</dbReference>
<dbReference type="RefSeq" id="WP_002856795.1">
    <property type="nucleotide sequence ID" value="NC_008787.1"/>
</dbReference>
<dbReference type="SMR" id="A1VZN9"/>
<dbReference type="KEGG" id="cjj:CJJ81176_0914"/>
<dbReference type="eggNOG" id="COG0787">
    <property type="taxonomic scope" value="Bacteria"/>
</dbReference>
<dbReference type="HOGENOM" id="CLU_028393_2_2_7"/>
<dbReference type="UniPathway" id="UPA00042">
    <property type="reaction ID" value="UER00497"/>
</dbReference>
<dbReference type="Proteomes" id="UP000000646">
    <property type="component" value="Chromosome"/>
</dbReference>
<dbReference type="GO" id="GO:0005829">
    <property type="term" value="C:cytosol"/>
    <property type="evidence" value="ECO:0007669"/>
    <property type="project" value="TreeGrafter"/>
</dbReference>
<dbReference type="GO" id="GO:0008784">
    <property type="term" value="F:alanine racemase activity"/>
    <property type="evidence" value="ECO:0007669"/>
    <property type="project" value="UniProtKB-UniRule"/>
</dbReference>
<dbReference type="GO" id="GO:0030170">
    <property type="term" value="F:pyridoxal phosphate binding"/>
    <property type="evidence" value="ECO:0007669"/>
    <property type="project" value="UniProtKB-UniRule"/>
</dbReference>
<dbReference type="GO" id="GO:0030632">
    <property type="term" value="P:D-alanine biosynthetic process"/>
    <property type="evidence" value="ECO:0007669"/>
    <property type="project" value="UniProtKB-UniRule"/>
</dbReference>
<dbReference type="GO" id="GO:0009252">
    <property type="term" value="P:peptidoglycan biosynthetic process"/>
    <property type="evidence" value="ECO:0007669"/>
    <property type="project" value="TreeGrafter"/>
</dbReference>
<dbReference type="Gene3D" id="3.20.20.10">
    <property type="entry name" value="Alanine racemase"/>
    <property type="match status" value="1"/>
</dbReference>
<dbReference type="Gene3D" id="2.40.37.10">
    <property type="entry name" value="Lyase, Ornithine Decarboxylase, Chain A, domain 1"/>
    <property type="match status" value="1"/>
</dbReference>
<dbReference type="HAMAP" id="MF_01201">
    <property type="entry name" value="Ala_racemase"/>
    <property type="match status" value="1"/>
</dbReference>
<dbReference type="InterPro" id="IPR000821">
    <property type="entry name" value="Ala_racemase"/>
</dbReference>
<dbReference type="InterPro" id="IPR009006">
    <property type="entry name" value="Ala_racemase/Decarboxylase_C"/>
</dbReference>
<dbReference type="InterPro" id="IPR011079">
    <property type="entry name" value="Ala_racemase_C"/>
</dbReference>
<dbReference type="InterPro" id="IPR001608">
    <property type="entry name" value="Ala_racemase_N"/>
</dbReference>
<dbReference type="InterPro" id="IPR020622">
    <property type="entry name" value="Ala_racemase_pyridoxalP-BS"/>
</dbReference>
<dbReference type="InterPro" id="IPR029066">
    <property type="entry name" value="PLP-binding_barrel"/>
</dbReference>
<dbReference type="NCBIfam" id="TIGR00492">
    <property type="entry name" value="alr"/>
    <property type="match status" value="1"/>
</dbReference>
<dbReference type="NCBIfam" id="NF000791">
    <property type="entry name" value="PRK00053.2-2"/>
    <property type="match status" value="1"/>
</dbReference>
<dbReference type="PANTHER" id="PTHR30511">
    <property type="entry name" value="ALANINE RACEMASE"/>
    <property type="match status" value="1"/>
</dbReference>
<dbReference type="PANTHER" id="PTHR30511:SF0">
    <property type="entry name" value="ALANINE RACEMASE, CATABOLIC-RELATED"/>
    <property type="match status" value="1"/>
</dbReference>
<dbReference type="Pfam" id="PF00842">
    <property type="entry name" value="Ala_racemase_C"/>
    <property type="match status" value="1"/>
</dbReference>
<dbReference type="Pfam" id="PF01168">
    <property type="entry name" value="Ala_racemase_N"/>
    <property type="match status" value="1"/>
</dbReference>
<dbReference type="PRINTS" id="PR00992">
    <property type="entry name" value="ALARACEMASE"/>
</dbReference>
<dbReference type="SMART" id="SM01005">
    <property type="entry name" value="Ala_racemase_C"/>
    <property type="match status" value="1"/>
</dbReference>
<dbReference type="SUPFAM" id="SSF50621">
    <property type="entry name" value="Alanine racemase C-terminal domain-like"/>
    <property type="match status" value="1"/>
</dbReference>
<dbReference type="SUPFAM" id="SSF51419">
    <property type="entry name" value="PLP-binding barrel"/>
    <property type="match status" value="1"/>
</dbReference>
<dbReference type="PROSITE" id="PS00395">
    <property type="entry name" value="ALANINE_RACEMASE"/>
    <property type="match status" value="1"/>
</dbReference>
<organism>
    <name type="scientific">Campylobacter jejuni subsp. jejuni serotype O:23/36 (strain 81-176)</name>
    <dbReference type="NCBI Taxonomy" id="354242"/>
    <lineage>
        <taxon>Bacteria</taxon>
        <taxon>Pseudomonadati</taxon>
        <taxon>Campylobacterota</taxon>
        <taxon>Epsilonproteobacteria</taxon>
        <taxon>Campylobacterales</taxon>
        <taxon>Campylobacteraceae</taxon>
        <taxon>Campylobacter</taxon>
    </lineage>
</organism>
<proteinExistence type="inferred from homology"/>
<protein>
    <recommendedName>
        <fullName evidence="1">Alanine racemase</fullName>
        <ecNumber evidence="1">5.1.1.1</ecNumber>
    </recommendedName>
</protein>
<reference key="1">
    <citation type="submission" date="2006-12" db="EMBL/GenBank/DDBJ databases">
        <authorList>
            <person name="Fouts D.E."/>
            <person name="Nelson K.E."/>
            <person name="Sebastian Y."/>
        </authorList>
    </citation>
    <scope>NUCLEOTIDE SEQUENCE [LARGE SCALE GENOMIC DNA]</scope>
    <source>
        <strain>81-176</strain>
    </source>
</reference>
<feature type="chain" id="PRO_1000138588" description="Alanine racemase">
    <location>
        <begin position="1"/>
        <end position="328"/>
    </location>
</feature>
<feature type="active site" description="Proton acceptor; specific for D-alanine" evidence="1">
    <location>
        <position position="33"/>
    </location>
</feature>
<feature type="active site" description="Proton acceptor; specific for L-alanine" evidence="1">
    <location>
        <position position="237"/>
    </location>
</feature>
<feature type="binding site" evidence="1">
    <location>
        <position position="118"/>
    </location>
    <ligand>
        <name>substrate</name>
    </ligand>
</feature>
<feature type="binding site" evidence="1">
    <location>
        <position position="283"/>
    </location>
    <ligand>
        <name>substrate</name>
    </ligand>
</feature>
<feature type="modified residue" description="N6-(pyridoxal phosphate)lysine" evidence="1">
    <location>
        <position position="33"/>
    </location>
</feature>
<accession>A1VZN9</accession>
<gene>
    <name type="primary">alr</name>
    <name type="ordered locus">CJJ81176_0914</name>
</gene>
<evidence type="ECO:0000255" key="1">
    <source>
        <dbReference type="HAMAP-Rule" id="MF_01201"/>
    </source>
</evidence>
<name>ALR_CAMJJ</name>